<name>RRF1_YEAST</name>
<organism>
    <name type="scientific">Saccharomyces cerevisiae (strain ATCC 204508 / S288c)</name>
    <name type="common">Baker's yeast</name>
    <dbReference type="NCBI Taxonomy" id="559292"/>
    <lineage>
        <taxon>Eukaryota</taxon>
        <taxon>Fungi</taxon>
        <taxon>Dikarya</taxon>
        <taxon>Ascomycota</taxon>
        <taxon>Saccharomycotina</taxon>
        <taxon>Saccharomycetes</taxon>
        <taxon>Saccharomycetales</taxon>
        <taxon>Saccharomycetaceae</taxon>
        <taxon>Saccharomyces</taxon>
    </lineage>
</organism>
<keyword id="KW-0496">Mitochondrion</keyword>
<keyword id="KW-0648">Protein biosynthesis</keyword>
<keyword id="KW-1185">Reference proteome</keyword>
<keyword id="KW-0809">Transit peptide</keyword>
<sequence length="230" mass="26407">MILTTARLNCRPVTVPRLFNRSFSQSFIILKKKSSTPTEKVEEDEIDVNELLKKAETQFKKTLEIQKQKMNEIKQGNFNPKVFNSLVFKNNRKFTDIATTSLKGKNALLITVFDPKDVKTVISGVLAANLNLTPERVPNNDLQLKVSLPPPTTESRLKVAKDLKRVFEEYKQSSLKDSLGTIRGSILKEFKSFKKDDAVRKAERDLEKLHKDYVNKLHDQFQKVEKSIVK</sequence>
<evidence type="ECO:0000255" key="1"/>
<evidence type="ECO:0000269" key="2">
    <source>
    </source>
</evidence>
<evidence type="ECO:0000269" key="3">
    <source>
    </source>
</evidence>
<evidence type="ECO:0000305" key="4"/>
<feature type="transit peptide" description="Mitochondrion" evidence="1">
    <location>
        <begin position="1"/>
        <end position="24"/>
    </location>
</feature>
<feature type="chain" id="PRO_0000031091" description="Ribosome-recycling factor, mitochondrial">
    <location>
        <begin position="25"/>
        <end position="230"/>
    </location>
</feature>
<gene>
    <name type="primary">RRF1</name>
    <name type="synonym">FIL1</name>
    <name type="synonym">KIM4</name>
    <name type="ordered locus">YHR038W</name>
</gene>
<proteinExistence type="evidence at protein level"/>
<accession>P38771</accession>
<accession>D3DKY5</accession>
<dbReference type="EMBL" id="AB016033">
    <property type="protein sequence ID" value="BAA31687.1"/>
    <property type="molecule type" value="Genomic_DNA"/>
</dbReference>
<dbReference type="EMBL" id="U00062">
    <property type="protein sequence ID" value="AAB68906.1"/>
    <property type="molecule type" value="Genomic_DNA"/>
</dbReference>
<dbReference type="EMBL" id="BK006934">
    <property type="protein sequence ID" value="DAA06729.1"/>
    <property type="molecule type" value="Genomic_DNA"/>
</dbReference>
<dbReference type="PIR" id="S46737">
    <property type="entry name" value="S46737"/>
</dbReference>
<dbReference type="RefSeq" id="NP_011903.1">
    <property type="nucleotide sequence ID" value="NM_001179168.1"/>
</dbReference>
<dbReference type="SMR" id="P38771"/>
<dbReference type="BioGRID" id="36469">
    <property type="interactions" value="62"/>
</dbReference>
<dbReference type="DIP" id="DIP-1693N"/>
<dbReference type="FunCoup" id="P38771">
    <property type="interactions" value="100"/>
</dbReference>
<dbReference type="IntAct" id="P38771">
    <property type="interactions" value="2"/>
</dbReference>
<dbReference type="MINT" id="P38771"/>
<dbReference type="STRING" id="4932.YHR038W"/>
<dbReference type="GlyGen" id="P38771">
    <property type="glycosylation" value="1 site, 1 O-linked glycan (1 site)"/>
</dbReference>
<dbReference type="iPTMnet" id="P38771"/>
<dbReference type="PaxDb" id="4932-YHR038W"/>
<dbReference type="PeptideAtlas" id="P38771"/>
<dbReference type="EnsemblFungi" id="YHR038W_mRNA">
    <property type="protein sequence ID" value="YHR038W"/>
    <property type="gene ID" value="YHR038W"/>
</dbReference>
<dbReference type="GeneID" id="856433"/>
<dbReference type="KEGG" id="sce:YHR038W"/>
<dbReference type="AGR" id="SGD:S000001080"/>
<dbReference type="SGD" id="S000001080">
    <property type="gene designation" value="RRF1"/>
</dbReference>
<dbReference type="VEuPathDB" id="FungiDB:YHR038W"/>
<dbReference type="eggNOG" id="KOG4759">
    <property type="taxonomic scope" value="Eukaryota"/>
</dbReference>
<dbReference type="GeneTree" id="ENSGT00390000005084"/>
<dbReference type="HOGENOM" id="CLU_085410_0_0_1"/>
<dbReference type="InParanoid" id="P38771"/>
<dbReference type="OMA" id="PNNDQQL"/>
<dbReference type="OrthoDB" id="407355at2759"/>
<dbReference type="BioCyc" id="YEAST:G3O-31097-MONOMER"/>
<dbReference type="BioGRID-ORCS" id="856433">
    <property type="hits" value="0 hits in 10 CRISPR screens"/>
</dbReference>
<dbReference type="PRO" id="PR:P38771"/>
<dbReference type="Proteomes" id="UP000002311">
    <property type="component" value="Chromosome VIII"/>
</dbReference>
<dbReference type="RNAct" id="P38771">
    <property type="molecule type" value="protein"/>
</dbReference>
<dbReference type="GO" id="GO:0005739">
    <property type="term" value="C:mitochondrion"/>
    <property type="evidence" value="ECO:0000314"/>
    <property type="project" value="SGD"/>
</dbReference>
<dbReference type="GO" id="GO:0043023">
    <property type="term" value="F:ribosomal large subunit binding"/>
    <property type="evidence" value="ECO:0000318"/>
    <property type="project" value="GO_Central"/>
</dbReference>
<dbReference type="GO" id="GO:0003747">
    <property type="term" value="F:translation release factor activity"/>
    <property type="evidence" value="ECO:0000266"/>
    <property type="project" value="SGD"/>
</dbReference>
<dbReference type="GO" id="GO:0032543">
    <property type="term" value="P:mitochondrial translation"/>
    <property type="evidence" value="ECO:0000315"/>
    <property type="project" value="SGD"/>
</dbReference>
<dbReference type="GO" id="GO:0006412">
    <property type="term" value="P:translation"/>
    <property type="evidence" value="ECO:0000318"/>
    <property type="project" value="GO_Central"/>
</dbReference>
<dbReference type="CDD" id="cd00520">
    <property type="entry name" value="RRF"/>
    <property type="match status" value="1"/>
</dbReference>
<dbReference type="FunFam" id="3.30.1360.40:FF:000018">
    <property type="entry name" value="Ribosome-recycling factor, mitochondrial"/>
    <property type="match status" value="1"/>
</dbReference>
<dbReference type="Gene3D" id="3.30.1360.40">
    <property type="match status" value="1"/>
</dbReference>
<dbReference type="Gene3D" id="1.10.132.20">
    <property type="entry name" value="Ribosome-recycling factor"/>
    <property type="match status" value="1"/>
</dbReference>
<dbReference type="InterPro" id="IPR002661">
    <property type="entry name" value="Ribosome_recyc_fac"/>
</dbReference>
<dbReference type="InterPro" id="IPR023584">
    <property type="entry name" value="Ribosome_recyc_fac_dom"/>
</dbReference>
<dbReference type="InterPro" id="IPR036191">
    <property type="entry name" value="RRF_sf"/>
</dbReference>
<dbReference type="PANTHER" id="PTHR20982:SF3">
    <property type="entry name" value="MITOCHONDRIAL RIBOSOME RECYCLING FACTOR PSEUDO 1"/>
    <property type="match status" value="1"/>
</dbReference>
<dbReference type="PANTHER" id="PTHR20982">
    <property type="entry name" value="RIBOSOME RECYCLING FACTOR"/>
    <property type="match status" value="1"/>
</dbReference>
<dbReference type="Pfam" id="PF01765">
    <property type="entry name" value="RRF"/>
    <property type="match status" value="1"/>
</dbReference>
<dbReference type="SUPFAM" id="SSF55194">
    <property type="entry name" value="Ribosome recycling factor, RRF"/>
    <property type="match status" value="1"/>
</dbReference>
<comment type="function">
    <text evidence="2">Necessary for protein synthesis in mitochondria. Functions as a ribosome recycling factor in mitochondria.</text>
</comment>
<comment type="subcellular location">
    <subcellularLocation>
        <location evidence="2">Mitochondrion</location>
    </subcellularLocation>
</comment>
<comment type="miscellaneous">
    <text evidence="3">Present with 1440 molecules/cell in log phase SD medium.</text>
</comment>
<comment type="similarity">
    <text evidence="4">Belongs to the RRF family.</text>
</comment>
<reference key="1">
    <citation type="journal article" date="1998" name="Eur. J. Biochem.">
        <title>A regulatory factor, Fil1p, involved in derepression of the isocitrate lyase gene in Saccharomyces cerevisiae -- a possible mitochondrial protein necessary for protein synthesis in mitochondria.</title>
        <authorList>
            <person name="Kanai T."/>
            <person name="Takeshita S."/>
            <person name="Atomi H."/>
            <person name="Umemura K."/>
            <person name="Ueda M."/>
            <person name="Tanaka A."/>
        </authorList>
    </citation>
    <scope>NUCLEOTIDE SEQUENCE [GENOMIC DNA]</scope>
    <source>
        <strain>MT8-1</strain>
    </source>
</reference>
<reference key="2">
    <citation type="journal article" date="1994" name="Science">
        <title>Complete nucleotide sequence of Saccharomyces cerevisiae chromosome VIII.</title>
        <authorList>
            <person name="Johnston M."/>
            <person name="Andrews S."/>
            <person name="Brinkman R."/>
            <person name="Cooper J."/>
            <person name="Ding H."/>
            <person name="Dover J."/>
            <person name="Du Z."/>
            <person name="Favello A."/>
            <person name="Fulton L."/>
            <person name="Gattung S."/>
            <person name="Geisel C."/>
            <person name="Kirsten J."/>
            <person name="Kucaba T."/>
            <person name="Hillier L.W."/>
            <person name="Jier M."/>
            <person name="Johnston L."/>
            <person name="Langston Y."/>
            <person name="Latreille P."/>
            <person name="Louis E.J."/>
            <person name="Macri C."/>
            <person name="Mardis E."/>
            <person name="Menezes S."/>
            <person name="Mouser L."/>
            <person name="Nhan M."/>
            <person name="Rifkin L."/>
            <person name="Riles L."/>
            <person name="St Peter H."/>
            <person name="Trevaskis E."/>
            <person name="Vaughan K."/>
            <person name="Vignati D."/>
            <person name="Wilcox L."/>
            <person name="Wohldman P."/>
            <person name="Waterston R."/>
            <person name="Wilson R."/>
            <person name="Vaudin M."/>
        </authorList>
    </citation>
    <scope>NUCLEOTIDE SEQUENCE [LARGE SCALE GENOMIC DNA]</scope>
    <source>
        <strain>ATCC 204508 / S288c</strain>
    </source>
</reference>
<reference key="3">
    <citation type="journal article" date="2014" name="G3 (Bethesda)">
        <title>The reference genome sequence of Saccharomyces cerevisiae: Then and now.</title>
        <authorList>
            <person name="Engel S.R."/>
            <person name="Dietrich F.S."/>
            <person name="Fisk D.G."/>
            <person name="Binkley G."/>
            <person name="Balakrishnan R."/>
            <person name="Costanzo M.C."/>
            <person name="Dwight S.S."/>
            <person name="Hitz B.C."/>
            <person name="Karra K."/>
            <person name="Nash R.S."/>
            <person name="Weng S."/>
            <person name="Wong E.D."/>
            <person name="Lloyd P."/>
            <person name="Skrzypek M.S."/>
            <person name="Miyasato S.R."/>
            <person name="Simison M."/>
            <person name="Cherry J.M."/>
        </authorList>
    </citation>
    <scope>GENOME REANNOTATION</scope>
    <source>
        <strain>ATCC 204508 / S288c</strain>
    </source>
</reference>
<reference key="4">
    <citation type="journal article" date="1995" name="Protein Sci.">
        <title>New protein functions in yeast chromosome VIII.</title>
        <authorList>
            <person name="Ouzounis C."/>
            <person name="Bork P."/>
            <person name="Casari G."/>
            <person name="Sander C."/>
        </authorList>
    </citation>
    <scope>SIMILARITY TO RRF</scope>
</reference>
<reference key="5">
    <citation type="journal article" date="2003" name="Nature">
        <title>Global analysis of protein expression in yeast.</title>
        <authorList>
            <person name="Ghaemmaghami S."/>
            <person name="Huh W.-K."/>
            <person name="Bower K."/>
            <person name="Howson R.W."/>
            <person name="Belle A."/>
            <person name="Dephoure N."/>
            <person name="O'Shea E.K."/>
            <person name="Weissman J.S."/>
        </authorList>
    </citation>
    <scope>LEVEL OF PROTEIN EXPRESSION [LARGE SCALE ANALYSIS]</scope>
</reference>
<reference key="6">
    <citation type="journal article" date="2003" name="Nucleic Acids Res.">
        <title>Temperature-sensitive mutation in yeast mitochondrial ribosome recycling factor (RRF).</title>
        <authorList>
            <person name="Teyssier E."/>
            <person name="Hirokawa G."/>
            <person name="Tretiakova A."/>
            <person name="Jameson B."/>
            <person name="Kaji A."/>
            <person name="Kaji H."/>
        </authorList>
    </citation>
    <scope>FUNCTION</scope>
    <scope>SUBCELLULAR LOCATION</scope>
</reference>
<protein>
    <recommendedName>
        <fullName>Ribosome-recycling factor, mitochondrial</fullName>
        <shortName>RRF</shortName>
    </recommendedName>
    <alternativeName>
        <fullName>Ribosome-releasing factor, mitochondrial</fullName>
    </alternativeName>
</protein>